<sequence>MISALLGRSKSELEEWAVAQGQPAFRGRQLHDWLYAKGVRDLQGITVLPKAWRASLQNEGVSVGRLHEQERRVSADATTKLLLGTEDGETLETVGIPTDQRLTVCVSSQVGCPMACRFCATGKGGLQRSLAGHEIVAQVLSIREVMERRPSHVVFMGMGEPLLNIEAVLESIRCLNDDLGIGQRRITVSTVGVPHTLPRLADLALKQLGRAQFTLAVSLHAPNQALREELIPTAKTYPYDALLDDCRYYLNKTGRRVSFEYILLGGVNDHPHHASELADRVGGFQSHVNLIAYNPIEEEEFQRPTTQRIEGFRRVLERRGVAVSLRASRGLDQDAACGQLRRNRRS</sequence>
<keyword id="KW-0004">4Fe-4S</keyword>
<keyword id="KW-0963">Cytoplasm</keyword>
<keyword id="KW-1015">Disulfide bond</keyword>
<keyword id="KW-0408">Iron</keyword>
<keyword id="KW-0411">Iron-sulfur</keyword>
<keyword id="KW-0479">Metal-binding</keyword>
<keyword id="KW-0489">Methyltransferase</keyword>
<keyword id="KW-1185">Reference proteome</keyword>
<keyword id="KW-0698">rRNA processing</keyword>
<keyword id="KW-0949">S-adenosyl-L-methionine</keyword>
<keyword id="KW-0808">Transferase</keyword>
<keyword id="KW-0819">tRNA processing</keyword>
<gene>
    <name evidence="1" type="primary">rlmN</name>
    <name type="ordered locus">sync_2354</name>
</gene>
<name>RLMN_SYNS3</name>
<evidence type="ECO:0000255" key="1">
    <source>
        <dbReference type="HAMAP-Rule" id="MF_01849"/>
    </source>
</evidence>
<evidence type="ECO:0000255" key="2">
    <source>
        <dbReference type="PROSITE-ProRule" id="PRU01266"/>
    </source>
</evidence>
<dbReference type="EC" id="2.1.1.192" evidence="1"/>
<dbReference type="EMBL" id="CP000435">
    <property type="protein sequence ID" value="ABI47820.1"/>
    <property type="molecule type" value="Genomic_DNA"/>
</dbReference>
<dbReference type="RefSeq" id="WP_011620262.1">
    <property type="nucleotide sequence ID" value="NC_008319.1"/>
</dbReference>
<dbReference type="SMR" id="Q0I7M1"/>
<dbReference type="STRING" id="64471.sync_2354"/>
<dbReference type="KEGG" id="syg:sync_2354"/>
<dbReference type="eggNOG" id="COG0820">
    <property type="taxonomic scope" value="Bacteria"/>
</dbReference>
<dbReference type="HOGENOM" id="CLU_029101_1_1_3"/>
<dbReference type="OrthoDB" id="9793973at2"/>
<dbReference type="Proteomes" id="UP000001961">
    <property type="component" value="Chromosome"/>
</dbReference>
<dbReference type="GO" id="GO:0005737">
    <property type="term" value="C:cytoplasm"/>
    <property type="evidence" value="ECO:0007669"/>
    <property type="project" value="UniProtKB-SubCell"/>
</dbReference>
<dbReference type="GO" id="GO:0051539">
    <property type="term" value="F:4 iron, 4 sulfur cluster binding"/>
    <property type="evidence" value="ECO:0007669"/>
    <property type="project" value="UniProtKB-UniRule"/>
</dbReference>
<dbReference type="GO" id="GO:0046872">
    <property type="term" value="F:metal ion binding"/>
    <property type="evidence" value="ECO:0007669"/>
    <property type="project" value="UniProtKB-KW"/>
</dbReference>
<dbReference type="GO" id="GO:0070040">
    <property type="term" value="F:rRNA (adenine(2503)-C2-)-methyltransferase activity"/>
    <property type="evidence" value="ECO:0007669"/>
    <property type="project" value="UniProtKB-UniRule"/>
</dbReference>
<dbReference type="GO" id="GO:0019843">
    <property type="term" value="F:rRNA binding"/>
    <property type="evidence" value="ECO:0007669"/>
    <property type="project" value="UniProtKB-UniRule"/>
</dbReference>
<dbReference type="GO" id="GO:0002935">
    <property type="term" value="F:tRNA (adenine(37)-C2)-methyltransferase activity"/>
    <property type="evidence" value="ECO:0007669"/>
    <property type="project" value="UniProtKB-UniRule"/>
</dbReference>
<dbReference type="GO" id="GO:0000049">
    <property type="term" value="F:tRNA binding"/>
    <property type="evidence" value="ECO:0007669"/>
    <property type="project" value="UniProtKB-UniRule"/>
</dbReference>
<dbReference type="GO" id="GO:0070475">
    <property type="term" value="P:rRNA base methylation"/>
    <property type="evidence" value="ECO:0007669"/>
    <property type="project" value="UniProtKB-UniRule"/>
</dbReference>
<dbReference type="GO" id="GO:0030488">
    <property type="term" value="P:tRNA methylation"/>
    <property type="evidence" value="ECO:0007669"/>
    <property type="project" value="UniProtKB-UniRule"/>
</dbReference>
<dbReference type="CDD" id="cd01335">
    <property type="entry name" value="Radical_SAM"/>
    <property type="match status" value="1"/>
</dbReference>
<dbReference type="FunFam" id="3.20.20.70:FF:000014">
    <property type="entry name" value="Probable dual-specificity RNA methyltransferase RlmN"/>
    <property type="match status" value="1"/>
</dbReference>
<dbReference type="Gene3D" id="1.10.150.530">
    <property type="match status" value="1"/>
</dbReference>
<dbReference type="Gene3D" id="3.20.20.70">
    <property type="entry name" value="Aldolase class I"/>
    <property type="match status" value="1"/>
</dbReference>
<dbReference type="HAMAP" id="MF_01849">
    <property type="entry name" value="RNA_methyltr_RlmN"/>
    <property type="match status" value="1"/>
</dbReference>
<dbReference type="InterPro" id="IPR013785">
    <property type="entry name" value="Aldolase_TIM"/>
</dbReference>
<dbReference type="InterPro" id="IPR040072">
    <property type="entry name" value="Methyltransferase_A"/>
</dbReference>
<dbReference type="InterPro" id="IPR048641">
    <property type="entry name" value="RlmN_N"/>
</dbReference>
<dbReference type="InterPro" id="IPR027492">
    <property type="entry name" value="RNA_MTrfase_RlmN"/>
</dbReference>
<dbReference type="InterPro" id="IPR004383">
    <property type="entry name" value="rRNA_lsu_MTrfase_RlmN/Cfr"/>
</dbReference>
<dbReference type="InterPro" id="IPR007197">
    <property type="entry name" value="rSAM"/>
</dbReference>
<dbReference type="NCBIfam" id="TIGR00048">
    <property type="entry name" value="rRNA_mod_RlmN"/>
    <property type="match status" value="1"/>
</dbReference>
<dbReference type="PANTHER" id="PTHR30544">
    <property type="entry name" value="23S RRNA METHYLTRANSFERASE"/>
    <property type="match status" value="1"/>
</dbReference>
<dbReference type="PANTHER" id="PTHR30544:SF5">
    <property type="entry name" value="RADICAL SAM CORE DOMAIN-CONTAINING PROTEIN"/>
    <property type="match status" value="1"/>
</dbReference>
<dbReference type="Pfam" id="PF04055">
    <property type="entry name" value="Radical_SAM"/>
    <property type="match status" value="1"/>
</dbReference>
<dbReference type="Pfam" id="PF21016">
    <property type="entry name" value="RlmN_N"/>
    <property type="match status" value="1"/>
</dbReference>
<dbReference type="PIRSF" id="PIRSF006004">
    <property type="entry name" value="CHP00048"/>
    <property type="match status" value="1"/>
</dbReference>
<dbReference type="SFLD" id="SFLDF00275">
    <property type="entry name" value="adenosine_C2_methyltransferase"/>
    <property type="match status" value="1"/>
</dbReference>
<dbReference type="SFLD" id="SFLDS00029">
    <property type="entry name" value="Radical_SAM"/>
    <property type="match status" value="1"/>
</dbReference>
<dbReference type="SUPFAM" id="SSF102114">
    <property type="entry name" value="Radical SAM enzymes"/>
    <property type="match status" value="1"/>
</dbReference>
<dbReference type="PROSITE" id="PS51918">
    <property type="entry name" value="RADICAL_SAM"/>
    <property type="match status" value="1"/>
</dbReference>
<reference key="1">
    <citation type="journal article" date="2006" name="Proc. Natl. Acad. Sci. U.S.A.">
        <title>Genome sequence of Synechococcus CC9311: insights into adaptation to a coastal environment.</title>
        <authorList>
            <person name="Palenik B."/>
            <person name="Ren Q."/>
            <person name="Dupont C.L."/>
            <person name="Myers G.S."/>
            <person name="Heidelberg J.F."/>
            <person name="Badger J.H."/>
            <person name="Madupu R."/>
            <person name="Nelson W.C."/>
            <person name="Brinkac L.M."/>
            <person name="Dodson R.J."/>
            <person name="Durkin A.S."/>
            <person name="Daugherty S.C."/>
            <person name="Sullivan S.A."/>
            <person name="Khouri H."/>
            <person name="Mohamoud Y."/>
            <person name="Halpin R."/>
            <person name="Paulsen I.T."/>
        </authorList>
    </citation>
    <scope>NUCLEOTIDE SEQUENCE [LARGE SCALE GENOMIC DNA]</scope>
    <source>
        <strain>CC9311</strain>
    </source>
</reference>
<feature type="chain" id="PRO_0000350483" description="Probable dual-specificity RNA methyltransferase RlmN">
    <location>
        <begin position="1"/>
        <end position="346"/>
    </location>
</feature>
<feature type="domain" description="Radical SAM core" evidence="2">
    <location>
        <begin position="98"/>
        <end position="332"/>
    </location>
</feature>
<feature type="active site" description="Proton acceptor" evidence="1">
    <location>
        <position position="92"/>
    </location>
</feature>
<feature type="active site" description="S-methylcysteine intermediate" evidence="1">
    <location>
        <position position="337"/>
    </location>
</feature>
<feature type="binding site" evidence="1">
    <location>
        <position position="112"/>
    </location>
    <ligand>
        <name>[4Fe-4S] cluster</name>
        <dbReference type="ChEBI" id="CHEBI:49883"/>
        <note>4Fe-4S-S-AdoMet</note>
    </ligand>
</feature>
<feature type="binding site" evidence="1">
    <location>
        <position position="116"/>
    </location>
    <ligand>
        <name>[4Fe-4S] cluster</name>
        <dbReference type="ChEBI" id="CHEBI:49883"/>
        <note>4Fe-4S-S-AdoMet</note>
    </ligand>
</feature>
<feature type="binding site" evidence="1">
    <location>
        <position position="119"/>
    </location>
    <ligand>
        <name>[4Fe-4S] cluster</name>
        <dbReference type="ChEBI" id="CHEBI:49883"/>
        <note>4Fe-4S-S-AdoMet</note>
    </ligand>
</feature>
<feature type="binding site" evidence="1">
    <location>
        <begin position="159"/>
        <end position="160"/>
    </location>
    <ligand>
        <name>S-adenosyl-L-methionine</name>
        <dbReference type="ChEBI" id="CHEBI:59789"/>
    </ligand>
</feature>
<feature type="binding site" evidence="1">
    <location>
        <position position="189"/>
    </location>
    <ligand>
        <name>S-adenosyl-L-methionine</name>
        <dbReference type="ChEBI" id="CHEBI:59789"/>
    </ligand>
</feature>
<feature type="binding site" evidence="1">
    <location>
        <begin position="218"/>
        <end position="220"/>
    </location>
    <ligand>
        <name>S-adenosyl-L-methionine</name>
        <dbReference type="ChEBI" id="CHEBI:59789"/>
    </ligand>
</feature>
<feature type="binding site" evidence="1">
    <location>
        <position position="294"/>
    </location>
    <ligand>
        <name>S-adenosyl-L-methionine</name>
        <dbReference type="ChEBI" id="CHEBI:59789"/>
    </ligand>
</feature>
<feature type="disulfide bond" description="(transient)" evidence="1">
    <location>
        <begin position="105"/>
        <end position="337"/>
    </location>
</feature>
<proteinExistence type="inferred from homology"/>
<comment type="function">
    <text evidence="1">Specifically methylates position 2 of adenine 2503 in 23S rRNA and position 2 of adenine 37 in tRNAs.</text>
</comment>
<comment type="catalytic activity">
    <reaction evidence="1">
        <text>adenosine(2503) in 23S rRNA + 2 reduced [2Fe-2S]-[ferredoxin] + 2 S-adenosyl-L-methionine = 2-methyladenosine(2503) in 23S rRNA + 5'-deoxyadenosine + L-methionine + 2 oxidized [2Fe-2S]-[ferredoxin] + S-adenosyl-L-homocysteine</text>
        <dbReference type="Rhea" id="RHEA:42916"/>
        <dbReference type="Rhea" id="RHEA-COMP:10000"/>
        <dbReference type="Rhea" id="RHEA-COMP:10001"/>
        <dbReference type="Rhea" id="RHEA-COMP:10152"/>
        <dbReference type="Rhea" id="RHEA-COMP:10282"/>
        <dbReference type="ChEBI" id="CHEBI:17319"/>
        <dbReference type="ChEBI" id="CHEBI:33737"/>
        <dbReference type="ChEBI" id="CHEBI:33738"/>
        <dbReference type="ChEBI" id="CHEBI:57844"/>
        <dbReference type="ChEBI" id="CHEBI:57856"/>
        <dbReference type="ChEBI" id="CHEBI:59789"/>
        <dbReference type="ChEBI" id="CHEBI:74411"/>
        <dbReference type="ChEBI" id="CHEBI:74497"/>
        <dbReference type="EC" id="2.1.1.192"/>
    </reaction>
</comment>
<comment type="catalytic activity">
    <reaction evidence="1">
        <text>adenosine(37) in tRNA + 2 reduced [2Fe-2S]-[ferredoxin] + 2 S-adenosyl-L-methionine = 2-methyladenosine(37) in tRNA + 5'-deoxyadenosine + L-methionine + 2 oxidized [2Fe-2S]-[ferredoxin] + S-adenosyl-L-homocysteine</text>
        <dbReference type="Rhea" id="RHEA:43332"/>
        <dbReference type="Rhea" id="RHEA-COMP:10000"/>
        <dbReference type="Rhea" id="RHEA-COMP:10001"/>
        <dbReference type="Rhea" id="RHEA-COMP:10162"/>
        <dbReference type="Rhea" id="RHEA-COMP:10485"/>
        <dbReference type="ChEBI" id="CHEBI:17319"/>
        <dbReference type="ChEBI" id="CHEBI:33737"/>
        <dbReference type="ChEBI" id="CHEBI:33738"/>
        <dbReference type="ChEBI" id="CHEBI:57844"/>
        <dbReference type="ChEBI" id="CHEBI:57856"/>
        <dbReference type="ChEBI" id="CHEBI:59789"/>
        <dbReference type="ChEBI" id="CHEBI:74411"/>
        <dbReference type="ChEBI" id="CHEBI:74497"/>
        <dbReference type="EC" id="2.1.1.192"/>
    </reaction>
</comment>
<comment type="cofactor">
    <cofactor evidence="1">
        <name>[4Fe-4S] cluster</name>
        <dbReference type="ChEBI" id="CHEBI:49883"/>
    </cofactor>
    <text evidence="1">Binds 1 [4Fe-4S] cluster. The cluster is coordinated with 3 cysteines and an exchangeable S-adenosyl-L-methionine.</text>
</comment>
<comment type="subcellular location">
    <subcellularLocation>
        <location evidence="1">Cytoplasm</location>
    </subcellularLocation>
</comment>
<comment type="miscellaneous">
    <text evidence="1">Reaction proceeds by a ping-pong mechanism involving intermediate methylation of a conserved cysteine residue.</text>
</comment>
<comment type="similarity">
    <text evidence="1">Belongs to the radical SAM superfamily. RlmN family.</text>
</comment>
<accession>Q0I7M1</accession>
<protein>
    <recommendedName>
        <fullName evidence="1">Probable dual-specificity RNA methyltransferase RlmN</fullName>
        <ecNumber evidence="1">2.1.1.192</ecNumber>
    </recommendedName>
    <alternativeName>
        <fullName evidence="1">23S rRNA (adenine(2503)-C(2))-methyltransferase</fullName>
    </alternativeName>
    <alternativeName>
        <fullName evidence="1">23S rRNA m2A2503 methyltransferase</fullName>
    </alternativeName>
    <alternativeName>
        <fullName evidence="1">Ribosomal RNA large subunit methyltransferase N</fullName>
    </alternativeName>
    <alternativeName>
        <fullName evidence="1">tRNA (adenine(37)-C(2))-methyltransferase</fullName>
    </alternativeName>
    <alternativeName>
        <fullName evidence="1">tRNA m2A37 methyltransferase</fullName>
    </alternativeName>
</protein>
<organism>
    <name type="scientific">Synechococcus sp. (strain CC9311)</name>
    <dbReference type="NCBI Taxonomy" id="64471"/>
    <lineage>
        <taxon>Bacteria</taxon>
        <taxon>Bacillati</taxon>
        <taxon>Cyanobacteriota</taxon>
        <taxon>Cyanophyceae</taxon>
        <taxon>Synechococcales</taxon>
        <taxon>Synechococcaceae</taxon>
        <taxon>Synechococcus</taxon>
    </lineage>
</organism>